<feature type="chain" id="PRO_0000200878" description="Uncharacterized protein y4jL">
    <location>
        <begin position="1"/>
        <end position="220"/>
    </location>
</feature>
<accession>P55512</accession>
<name>Y4JL_SINFN</name>
<geneLocation type="plasmid">
    <name>sym pNGR234a</name>
</geneLocation>
<organism>
    <name type="scientific">Sinorhizobium fredii (strain NBRC 101917 / NGR234)</name>
    <dbReference type="NCBI Taxonomy" id="394"/>
    <lineage>
        <taxon>Bacteria</taxon>
        <taxon>Pseudomonadati</taxon>
        <taxon>Pseudomonadota</taxon>
        <taxon>Alphaproteobacteria</taxon>
        <taxon>Hyphomicrobiales</taxon>
        <taxon>Rhizobiaceae</taxon>
        <taxon>Sinorhizobium/Ensifer group</taxon>
        <taxon>Sinorhizobium</taxon>
    </lineage>
</organism>
<reference key="1">
    <citation type="journal article" date="1997" name="Nature">
        <title>Molecular basis of symbiosis between Rhizobium and legumes.</title>
        <authorList>
            <person name="Freiberg C.A."/>
            <person name="Fellay R."/>
            <person name="Bairoch A."/>
            <person name="Broughton W.J."/>
            <person name="Rosenthal A."/>
            <person name="Perret X."/>
        </authorList>
    </citation>
    <scope>NUCLEOTIDE SEQUENCE [LARGE SCALE GENOMIC DNA]</scope>
    <source>
        <strain>NBRC 101917 / NGR234</strain>
    </source>
</reference>
<reference key="2">
    <citation type="journal article" date="2009" name="Appl. Environ. Microbiol.">
        <title>Rhizobium sp. strain NGR234 possesses a remarkable number of secretion systems.</title>
        <authorList>
            <person name="Schmeisser C."/>
            <person name="Liesegang H."/>
            <person name="Krysciak D."/>
            <person name="Bakkou N."/>
            <person name="Le Quere A."/>
            <person name="Wollherr A."/>
            <person name="Heinemeyer I."/>
            <person name="Morgenstern B."/>
            <person name="Pommerening-Roeser A."/>
            <person name="Flores M."/>
            <person name="Palacios R."/>
            <person name="Brenner S."/>
            <person name="Gottschalk G."/>
            <person name="Schmitz R.A."/>
            <person name="Broughton W.J."/>
            <person name="Perret X."/>
            <person name="Strittmatter A.W."/>
            <person name="Streit W.R."/>
        </authorList>
    </citation>
    <scope>NUCLEOTIDE SEQUENCE [LARGE SCALE GENOMIC DNA]</scope>
    <source>
        <strain>NBRC 101917 / NGR234</strain>
    </source>
</reference>
<sequence>MQGQDLAMLPEIRLMGDVDVAALSPLFRGMVMTVSYAETQGGIGLTASGAMNRKFVHWAAVHFDWPGHTSDDLYSVSKVLNEADMPPLLVVRDMLKHLRLLRRRKDVLVPTQRGRDFLVRPQAFFDLIATDYLYAYIHYGQTREAVRNRMRWWHVFLNLINMKAETGCSLDDLANELYPSESYPEPAEMTVETWAERSALRYDSFARCAGWDCCTKSARG</sequence>
<dbReference type="EMBL" id="U00090">
    <property type="protein sequence ID" value="AAB91724.1"/>
    <property type="molecule type" value="Genomic_DNA"/>
</dbReference>
<dbReference type="PIR" id="T28639">
    <property type="entry name" value="T28639"/>
</dbReference>
<dbReference type="RefSeq" id="NP_443922.1">
    <property type="nucleotide sequence ID" value="NC_000914.2"/>
</dbReference>
<dbReference type="KEGG" id="rhi:NGR_a03030"/>
<dbReference type="eggNOG" id="COG0553">
    <property type="taxonomic scope" value="Bacteria"/>
</dbReference>
<dbReference type="HOGENOM" id="CLU_100986_0_0_5"/>
<dbReference type="OrthoDB" id="7495008at2"/>
<dbReference type="Proteomes" id="UP000001054">
    <property type="component" value="Plasmid pNGR234a"/>
</dbReference>
<keyword id="KW-0614">Plasmid</keyword>
<keyword id="KW-1185">Reference proteome</keyword>
<protein>
    <recommendedName>
        <fullName>Uncharacterized protein y4jL</fullName>
    </recommendedName>
</protein>
<gene>
    <name type="ordered locus">NGR_a03030</name>
    <name type="ORF">y4jL</name>
</gene>
<proteinExistence type="predicted"/>